<feature type="chain" id="PRO_0000199176" description="B-phycoerythrin alpha chain">
    <location>
        <begin position="1"/>
        <end position="164"/>
    </location>
</feature>
<feature type="binding site" description="covalent">
    <location>
        <position position="82"/>
    </location>
    <ligand>
        <name>(2R,3E)-phycoerythrobilin</name>
        <dbReference type="ChEBI" id="CHEBI:85276"/>
        <label>1</label>
    </ligand>
</feature>
<feature type="binding site" description="covalent">
    <location>
        <position position="139"/>
    </location>
    <ligand>
        <name>(2R,3E)-phycoerythrobilin</name>
        <dbReference type="ChEBI" id="CHEBI:85276"/>
        <label>2</label>
    </ligand>
</feature>
<feature type="helix" evidence="3">
    <location>
        <begin position="4"/>
        <end position="15"/>
    </location>
</feature>
<feature type="helix" evidence="3">
    <location>
        <begin position="21"/>
        <end position="62"/>
    </location>
</feature>
<feature type="helix" evidence="3">
    <location>
        <begin position="64"/>
        <end position="67"/>
    </location>
</feature>
<feature type="helix" evidence="3">
    <location>
        <begin position="76"/>
        <end position="99"/>
    </location>
</feature>
<feature type="helix" evidence="3">
    <location>
        <begin position="103"/>
        <end position="108"/>
    </location>
</feature>
<feature type="turn" evidence="3">
    <location>
        <begin position="109"/>
        <end position="112"/>
    </location>
</feature>
<feature type="helix" evidence="3">
    <location>
        <begin position="113"/>
        <end position="119"/>
    </location>
</feature>
<feature type="helix" evidence="3">
    <location>
        <begin position="124"/>
        <end position="137"/>
    </location>
</feature>
<feature type="turn" evidence="3">
    <location>
        <begin position="140"/>
        <end position="143"/>
    </location>
</feature>
<feature type="helix" evidence="3">
    <location>
        <begin position="146"/>
        <end position="162"/>
    </location>
</feature>
<proteinExistence type="evidence at protein level"/>
<protein>
    <recommendedName>
        <fullName>B-phycoerythrin alpha chain</fullName>
    </recommendedName>
</protein>
<reference key="1">
    <citation type="journal article" date="1989" name="Biol. Chem. Hoppe-Seyler">
        <title>The complete amino-acid sequence of the alpha and beta subunits of B-phycoerythrin from the rhodophytan alga Porphyridium cruentum.</title>
        <authorList>
            <person name="Sidler W."/>
            <person name="Kumpf B."/>
            <person name="Suter F."/>
            <person name="Klotz A.V."/>
            <person name="Glazer A.N."/>
            <person name="Zuber H."/>
        </authorList>
    </citation>
    <scope>PROTEIN SEQUENCE</scope>
</reference>
<reference key="2">
    <citation type="journal article" date="1984" name="J. Biol. Chem.">
        <title>Bilin attachment sites in the alpha and beta subunits of B-phycoerythrin. Amino acid sequence studies.</title>
        <authorList>
            <person name="Lundell D.J."/>
            <person name="Glazer A.N."/>
            <person name="DeLange R.J."/>
            <person name="Brown D.M."/>
        </authorList>
    </citation>
    <scope>PROTEIN SEQUENCE OF 79-84 AND 136-142</scope>
    <scope>CHROMOPHORE BINDING AT CYS-82 AND CYS-139</scope>
</reference>
<geneLocation type="chloroplast"/>
<gene>
    <name type="primary">cpeA</name>
</gene>
<sequence length="164" mass="17817">MKSVITTVVSAADAAGRFPSNSDLESIQGNIQRSAARLEAAEKLAGNHEAVVKEAGDACFAKYAYLKNPGEAGENQEKINKCYRDVDHYMRLVNYDLVVGGTGPLDEWGIAGAREVYRTLNLPTSAYVASIAYTRDRLCVPRDMSAQAGVEFSAYLDYLINALS</sequence>
<keyword id="KW-0002">3D-structure</keyword>
<keyword id="KW-0042">Antenna complex</keyword>
<keyword id="KW-0089">Bile pigment</keyword>
<keyword id="KW-0150">Chloroplast</keyword>
<keyword id="KW-0157">Chromophore</keyword>
<keyword id="KW-0903">Direct protein sequencing</keyword>
<keyword id="KW-0249">Electron transport</keyword>
<keyword id="KW-0472">Membrane</keyword>
<keyword id="KW-0602">Photosynthesis</keyword>
<keyword id="KW-0605">Phycobilisome</keyword>
<keyword id="KW-0934">Plastid</keyword>
<keyword id="KW-0793">Thylakoid</keyword>
<keyword id="KW-0813">Transport</keyword>
<evidence type="ECO:0000250" key="1"/>
<evidence type="ECO:0000305" key="2"/>
<evidence type="ECO:0007829" key="3">
    <source>
        <dbReference type="PDB" id="3V57"/>
    </source>
</evidence>
<comment type="function">
    <text>Light-harvesting photosynthetic bile pigment-protein from the phycobiliprotein complex.</text>
</comment>
<comment type="subunit">
    <text evidence="1">Heteromer of 6 alpha, 6 beta and one gamma chain.</text>
</comment>
<comment type="subcellular location">
    <subcellularLocation>
        <location evidence="1">Plastid</location>
        <location evidence="1">Chloroplast thylakoid membrane</location>
        <topology evidence="1">Peripheral membrane protein</topology>
        <orientation evidence="1">Stromal side</orientation>
    </subcellularLocation>
    <text evidence="1">Forms the periphery of the phycobilisome rod.</text>
</comment>
<comment type="PTM">
    <text>Contains two covalently linked bilin chromophores.</text>
</comment>
<comment type="similarity">
    <text evidence="2">Belongs to the phycobiliprotein family.</text>
</comment>
<dbReference type="PIR" id="S02817">
    <property type="entry name" value="S02817"/>
</dbReference>
<dbReference type="PDB" id="3V57">
    <property type="method" value="X-ray"/>
    <property type="resolution" value="1.70 A"/>
    <property type="chains" value="A/C=1-164"/>
</dbReference>
<dbReference type="PDB" id="3V58">
    <property type="method" value="X-ray"/>
    <property type="resolution" value="1.85 A"/>
    <property type="chains" value="A/C=1-164"/>
</dbReference>
<dbReference type="PDB" id="7Y1A">
    <property type="method" value="EM"/>
    <property type="resolution" value="6.30 A"/>
    <property type="chains" value="p/r/t/v/x/z=1-164"/>
</dbReference>
<dbReference type="PDB" id="7Y4L">
    <property type="method" value="EM"/>
    <property type="resolution" value="3.30 A"/>
    <property type="chains" value="A1/A7/A8/A9/AF/AG/AI/AK/B5/BJ/C1/C4/C7/C8/C9/CF/CG/CH/CI/CK/D5/DJ/E1/E4/E7/E8/E9/EF/EG/EH=1-164"/>
</dbReference>
<dbReference type="PDB" id="7Y5E">
    <property type="method" value="EM"/>
    <property type="resolution" value="3.30 A"/>
    <property type="chains" value="A5/A7/A9/AA/AF/AI/AK/AP/BD/BQ/C5/C7/C9/CA/CF/CI/CJ/CK/CM/CP/DD/DQ/E5/E7/E9/EA/EF/EI/EJ/EK=1-164"/>
</dbReference>
<dbReference type="PDB" id="7Y7A">
    <property type="method" value="EM"/>
    <property type="resolution" value="4.30 A"/>
    <property type="chains" value="A5/A6/AD/AH/AJ/AL/AQ/AT/AU/Aa/Ab/Af/Ag/Ah/Ai/Ak/B2/BF/BM/Bc/C3/C5/C6/CC/CD/CH/CJ/CL/CQ/CT=1-164"/>
</dbReference>
<dbReference type="PDB" id="8B4N">
    <property type="method" value="X-ray"/>
    <property type="resolution" value="1.60 A"/>
    <property type="chains" value="AAA/CCC=1-164"/>
</dbReference>
<dbReference type="PDBsum" id="3V57"/>
<dbReference type="PDBsum" id="3V58"/>
<dbReference type="PDBsum" id="7Y1A"/>
<dbReference type="PDBsum" id="7Y4L"/>
<dbReference type="PDBsum" id="7Y5E"/>
<dbReference type="PDBsum" id="7Y7A"/>
<dbReference type="PDBsum" id="8B4N"/>
<dbReference type="EMDB" id="EMD-33558"/>
<dbReference type="EMDB" id="EMD-33605"/>
<dbReference type="SMR" id="P11392"/>
<dbReference type="IntAct" id="P11392">
    <property type="interactions" value="1"/>
</dbReference>
<dbReference type="MINT" id="P11392"/>
<dbReference type="EvolutionaryTrace" id="P11392"/>
<dbReference type="GO" id="GO:0009535">
    <property type="term" value="C:chloroplast thylakoid membrane"/>
    <property type="evidence" value="ECO:0007669"/>
    <property type="project" value="UniProtKB-SubCell"/>
</dbReference>
<dbReference type="GO" id="GO:0030089">
    <property type="term" value="C:phycobilisome"/>
    <property type="evidence" value="ECO:0007669"/>
    <property type="project" value="UniProtKB-KW"/>
</dbReference>
<dbReference type="GO" id="GO:0015979">
    <property type="term" value="P:photosynthesis"/>
    <property type="evidence" value="ECO:0007669"/>
    <property type="project" value="UniProtKB-KW"/>
</dbReference>
<dbReference type="CDD" id="cd14769">
    <property type="entry name" value="PE_alpha"/>
    <property type="match status" value="1"/>
</dbReference>
<dbReference type="Gene3D" id="1.10.490.20">
    <property type="entry name" value="Phycocyanins"/>
    <property type="match status" value="1"/>
</dbReference>
<dbReference type="InterPro" id="IPR009050">
    <property type="entry name" value="Globin-like_sf"/>
</dbReference>
<dbReference type="InterPro" id="IPR012128">
    <property type="entry name" value="Phycobilisome_asu/bsu"/>
</dbReference>
<dbReference type="InterPro" id="IPR038719">
    <property type="entry name" value="Phycobilisome_asu/bsu_sf"/>
</dbReference>
<dbReference type="PANTHER" id="PTHR34011:SF4">
    <property type="entry name" value="C-PHYCOCYANIN ALPHA SUBUNIT"/>
    <property type="match status" value="1"/>
</dbReference>
<dbReference type="PANTHER" id="PTHR34011">
    <property type="entry name" value="PHYCOBILISOME 32.1 KDA LINKER POLYPEPTIDE, PHYCOCYANIN-ASSOCIATED, ROD 2-RELATED"/>
    <property type="match status" value="1"/>
</dbReference>
<dbReference type="Pfam" id="PF00502">
    <property type="entry name" value="Phycobilisome"/>
    <property type="match status" value="1"/>
</dbReference>
<dbReference type="PIRSF" id="PIRSF000081">
    <property type="entry name" value="Phycocyanin"/>
    <property type="match status" value="1"/>
</dbReference>
<dbReference type="SUPFAM" id="SSF46458">
    <property type="entry name" value="Globin-like"/>
    <property type="match status" value="1"/>
</dbReference>
<organism>
    <name type="scientific">Porphyridium purpureum</name>
    <name type="common">Red alga</name>
    <name type="synonym">Porphyridium cruentum</name>
    <dbReference type="NCBI Taxonomy" id="35688"/>
    <lineage>
        <taxon>Eukaryota</taxon>
        <taxon>Rhodophyta</taxon>
        <taxon>Bangiophyceae</taxon>
        <taxon>Porphyridiales</taxon>
        <taxon>Porphyridiaceae</taxon>
        <taxon>Porphyridium</taxon>
    </lineage>
</organism>
<name>PHEA_PORPP</name>
<accession>P11392</accession>